<proteinExistence type="inferred from homology"/>
<sequence>MIASIRGVIQSIGNDYLIVETGGIGFLIYAPRSTLSAAGAVGSDIFLHTILIVREDALTLYGFSDNAQRSLFEQLIGVSGVGPKLALSLLSSGTPDEVRSMIAGGDVARLARVPGIGKKTAERIVLELRGKIDFRQLAASGSTSVSALDRELSEILVSLGYSAAEAAAAIASLPSDAPPTLEERLRLALRYFGSA</sequence>
<comment type="function">
    <text evidence="1">The RuvA-RuvB-RuvC complex processes Holliday junction (HJ) DNA during genetic recombination and DNA repair, while the RuvA-RuvB complex plays an important role in the rescue of blocked DNA replication forks via replication fork reversal (RFR). RuvA specifically binds to HJ cruciform DNA, conferring on it an open structure. The RuvB hexamer acts as an ATP-dependent pump, pulling dsDNA into and through the RuvAB complex. HJ branch migration allows RuvC to scan DNA until it finds its consensus sequence, where it cleaves and resolves the cruciform DNA.</text>
</comment>
<comment type="subunit">
    <text evidence="1">Homotetramer. Forms an RuvA(8)-RuvB(12)-Holliday junction (HJ) complex. HJ DNA is sandwiched between 2 RuvA tetramers; dsDNA enters through RuvA and exits via RuvB. An RuvB hexamer assembles on each DNA strand where it exits the tetramer. Each RuvB hexamer is contacted by two RuvA subunits (via domain III) on 2 adjacent RuvB subunits; this complex drives branch migration. In the full resolvosome a probable DNA-RuvA(4)-RuvB(12)-RuvC(2) complex forms which resolves the HJ.</text>
</comment>
<comment type="subcellular location">
    <subcellularLocation>
        <location evidence="1">Cytoplasm</location>
    </subcellularLocation>
</comment>
<comment type="domain">
    <text evidence="1">Has three domains with a flexible linker between the domains II and III and assumes an 'L' shape. Domain III is highly mobile and contacts RuvB.</text>
</comment>
<comment type="similarity">
    <text evidence="1">Belongs to the RuvA family.</text>
</comment>
<gene>
    <name evidence="1" type="primary">ruvA</name>
    <name type="ordered locus">Cagg_2134</name>
</gene>
<evidence type="ECO:0000255" key="1">
    <source>
        <dbReference type="HAMAP-Rule" id="MF_00031"/>
    </source>
</evidence>
<accession>B8GCH4</accession>
<keyword id="KW-0963">Cytoplasm</keyword>
<keyword id="KW-0227">DNA damage</keyword>
<keyword id="KW-0233">DNA recombination</keyword>
<keyword id="KW-0234">DNA repair</keyword>
<keyword id="KW-0238">DNA-binding</keyword>
<organism>
    <name type="scientific">Chloroflexus aggregans (strain MD-66 / DSM 9485)</name>
    <dbReference type="NCBI Taxonomy" id="326427"/>
    <lineage>
        <taxon>Bacteria</taxon>
        <taxon>Bacillati</taxon>
        <taxon>Chloroflexota</taxon>
        <taxon>Chloroflexia</taxon>
        <taxon>Chloroflexales</taxon>
        <taxon>Chloroflexineae</taxon>
        <taxon>Chloroflexaceae</taxon>
        <taxon>Chloroflexus</taxon>
    </lineage>
</organism>
<reference key="1">
    <citation type="submission" date="2008-12" db="EMBL/GenBank/DDBJ databases">
        <title>Complete sequence of Chloroflexus aggregans DSM 9485.</title>
        <authorList>
            <consortium name="US DOE Joint Genome Institute"/>
            <person name="Lucas S."/>
            <person name="Copeland A."/>
            <person name="Lapidus A."/>
            <person name="Glavina del Rio T."/>
            <person name="Dalin E."/>
            <person name="Tice H."/>
            <person name="Pitluck S."/>
            <person name="Foster B."/>
            <person name="Larimer F."/>
            <person name="Land M."/>
            <person name="Hauser L."/>
            <person name="Kyrpides N."/>
            <person name="Mikhailova N."/>
            <person name="Bryant D.A."/>
            <person name="Richardson P."/>
        </authorList>
    </citation>
    <scope>NUCLEOTIDE SEQUENCE [LARGE SCALE GENOMIC DNA]</scope>
    <source>
        <strain>MD-66 / DSM 9485</strain>
    </source>
</reference>
<protein>
    <recommendedName>
        <fullName evidence="1">Holliday junction branch migration complex subunit RuvA</fullName>
    </recommendedName>
</protein>
<dbReference type="EMBL" id="CP001337">
    <property type="protein sequence ID" value="ACL25018.1"/>
    <property type="molecule type" value="Genomic_DNA"/>
</dbReference>
<dbReference type="RefSeq" id="WP_015940876.1">
    <property type="nucleotide sequence ID" value="NC_011831.1"/>
</dbReference>
<dbReference type="SMR" id="B8GCH4"/>
<dbReference type="STRING" id="326427.Cagg_2134"/>
<dbReference type="KEGG" id="cag:Cagg_2134"/>
<dbReference type="eggNOG" id="COG0632">
    <property type="taxonomic scope" value="Bacteria"/>
</dbReference>
<dbReference type="HOGENOM" id="CLU_087936_2_1_0"/>
<dbReference type="OrthoDB" id="5293449at2"/>
<dbReference type="Proteomes" id="UP000002508">
    <property type="component" value="Chromosome"/>
</dbReference>
<dbReference type="GO" id="GO:0005737">
    <property type="term" value="C:cytoplasm"/>
    <property type="evidence" value="ECO:0007669"/>
    <property type="project" value="UniProtKB-SubCell"/>
</dbReference>
<dbReference type="GO" id="GO:0009379">
    <property type="term" value="C:Holliday junction helicase complex"/>
    <property type="evidence" value="ECO:0007669"/>
    <property type="project" value="InterPro"/>
</dbReference>
<dbReference type="GO" id="GO:0048476">
    <property type="term" value="C:Holliday junction resolvase complex"/>
    <property type="evidence" value="ECO:0007669"/>
    <property type="project" value="UniProtKB-UniRule"/>
</dbReference>
<dbReference type="GO" id="GO:0005524">
    <property type="term" value="F:ATP binding"/>
    <property type="evidence" value="ECO:0007669"/>
    <property type="project" value="InterPro"/>
</dbReference>
<dbReference type="GO" id="GO:0000400">
    <property type="term" value="F:four-way junction DNA binding"/>
    <property type="evidence" value="ECO:0007669"/>
    <property type="project" value="UniProtKB-UniRule"/>
</dbReference>
<dbReference type="GO" id="GO:0009378">
    <property type="term" value="F:four-way junction helicase activity"/>
    <property type="evidence" value="ECO:0007669"/>
    <property type="project" value="InterPro"/>
</dbReference>
<dbReference type="GO" id="GO:0006310">
    <property type="term" value="P:DNA recombination"/>
    <property type="evidence" value="ECO:0007669"/>
    <property type="project" value="UniProtKB-UniRule"/>
</dbReference>
<dbReference type="GO" id="GO:0006281">
    <property type="term" value="P:DNA repair"/>
    <property type="evidence" value="ECO:0007669"/>
    <property type="project" value="UniProtKB-UniRule"/>
</dbReference>
<dbReference type="Gene3D" id="1.10.150.20">
    <property type="entry name" value="5' to 3' exonuclease, C-terminal subdomain"/>
    <property type="match status" value="1"/>
</dbReference>
<dbReference type="Gene3D" id="1.10.8.10">
    <property type="entry name" value="DNA helicase RuvA subunit, C-terminal domain"/>
    <property type="match status" value="1"/>
</dbReference>
<dbReference type="Gene3D" id="2.40.50.140">
    <property type="entry name" value="Nucleic acid-binding proteins"/>
    <property type="match status" value="1"/>
</dbReference>
<dbReference type="HAMAP" id="MF_00031">
    <property type="entry name" value="DNA_HJ_migration_RuvA"/>
    <property type="match status" value="1"/>
</dbReference>
<dbReference type="InterPro" id="IPR013849">
    <property type="entry name" value="DNA_helicase_Holl-junc_RuvA_I"/>
</dbReference>
<dbReference type="InterPro" id="IPR003583">
    <property type="entry name" value="Hlx-hairpin-Hlx_DNA-bd_motif"/>
</dbReference>
<dbReference type="InterPro" id="IPR012340">
    <property type="entry name" value="NA-bd_OB-fold"/>
</dbReference>
<dbReference type="InterPro" id="IPR000085">
    <property type="entry name" value="RuvA"/>
</dbReference>
<dbReference type="InterPro" id="IPR010994">
    <property type="entry name" value="RuvA_2-like"/>
</dbReference>
<dbReference type="InterPro" id="IPR011114">
    <property type="entry name" value="RuvA_C"/>
</dbReference>
<dbReference type="InterPro" id="IPR036267">
    <property type="entry name" value="RuvA_C_sf"/>
</dbReference>
<dbReference type="NCBIfam" id="TIGR00084">
    <property type="entry name" value="ruvA"/>
    <property type="match status" value="1"/>
</dbReference>
<dbReference type="Pfam" id="PF14520">
    <property type="entry name" value="HHH_5"/>
    <property type="match status" value="1"/>
</dbReference>
<dbReference type="Pfam" id="PF07499">
    <property type="entry name" value="RuvA_C"/>
    <property type="match status" value="1"/>
</dbReference>
<dbReference type="Pfam" id="PF01330">
    <property type="entry name" value="RuvA_N"/>
    <property type="match status" value="1"/>
</dbReference>
<dbReference type="SMART" id="SM00278">
    <property type="entry name" value="HhH1"/>
    <property type="match status" value="2"/>
</dbReference>
<dbReference type="SUPFAM" id="SSF46929">
    <property type="entry name" value="DNA helicase RuvA subunit, C-terminal domain"/>
    <property type="match status" value="1"/>
</dbReference>
<dbReference type="SUPFAM" id="SSF50249">
    <property type="entry name" value="Nucleic acid-binding proteins"/>
    <property type="match status" value="1"/>
</dbReference>
<dbReference type="SUPFAM" id="SSF47781">
    <property type="entry name" value="RuvA domain 2-like"/>
    <property type="match status" value="1"/>
</dbReference>
<feature type="chain" id="PRO_1000195127" description="Holliday junction branch migration complex subunit RuvA">
    <location>
        <begin position="1"/>
        <end position="195"/>
    </location>
</feature>
<feature type="region of interest" description="Domain I" evidence="1">
    <location>
        <begin position="1"/>
        <end position="64"/>
    </location>
</feature>
<feature type="region of interest" description="Domain II" evidence="1">
    <location>
        <begin position="65"/>
        <end position="139"/>
    </location>
</feature>
<feature type="region of interest" description="Flexible linker" evidence="1">
    <location>
        <begin position="139"/>
        <end position="143"/>
    </location>
</feature>
<feature type="region of interest" description="Domain III" evidence="1">
    <location>
        <begin position="144"/>
        <end position="195"/>
    </location>
</feature>
<name>RUVA_CHLAD</name>